<accession>A6WMK0</accession>
<protein>
    <recommendedName>
        <fullName evidence="1">YcgL domain-containing protein Shew185_1896</fullName>
    </recommendedName>
</protein>
<reference key="1">
    <citation type="submission" date="2007-07" db="EMBL/GenBank/DDBJ databases">
        <title>Complete sequence of chromosome of Shewanella baltica OS185.</title>
        <authorList>
            <consortium name="US DOE Joint Genome Institute"/>
            <person name="Copeland A."/>
            <person name="Lucas S."/>
            <person name="Lapidus A."/>
            <person name="Barry K."/>
            <person name="Glavina del Rio T."/>
            <person name="Dalin E."/>
            <person name="Tice H."/>
            <person name="Pitluck S."/>
            <person name="Sims D."/>
            <person name="Brettin T."/>
            <person name="Bruce D."/>
            <person name="Detter J.C."/>
            <person name="Han C."/>
            <person name="Schmutz J."/>
            <person name="Larimer F."/>
            <person name="Land M."/>
            <person name="Hauser L."/>
            <person name="Kyrpides N."/>
            <person name="Mikhailova N."/>
            <person name="Brettar I."/>
            <person name="Rodrigues J."/>
            <person name="Konstantinidis K."/>
            <person name="Tiedje J."/>
            <person name="Richardson P."/>
        </authorList>
    </citation>
    <scope>NUCLEOTIDE SEQUENCE [LARGE SCALE GENOMIC DNA]</scope>
    <source>
        <strain>OS185</strain>
    </source>
</reference>
<sequence length="92" mass="10374">MLCAVYKSSRKADTYLFVKKRDCFDDVPAPLMEMFGVPKLVMVFPIAKRDALGMADIQKVRAAMEENGFYLQIPPPQVNLLAEHKLSLGIKD</sequence>
<dbReference type="EMBL" id="CP000753">
    <property type="protein sequence ID" value="ABS08039.1"/>
    <property type="molecule type" value="Genomic_DNA"/>
</dbReference>
<dbReference type="RefSeq" id="WP_006081364.1">
    <property type="nucleotide sequence ID" value="NC_009665.1"/>
</dbReference>
<dbReference type="SMR" id="A6WMK0"/>
<dbReference type="GeneID" id="11774729"/>
<dbReference type="KEGG" id="sbm:Shew185_1896"/>
<dbReference type="HOGENOM" id="CLU_155118_1_0_6"/>
<dbReference type="Gene3D" id="3.10.510.20">
    <property type="entry name" value="YcgL domain"/>
    <property type="match status" value="1"/>
</dbReference>
<dbReference type="HAMAP" id="MF_01866">
    <property type="entry name" value="UPF0745"/>
    <property type="match status" value="1"/>
</dbReference>
<dbReference type="InterPro" id="IPR038068">
    <property type="entry name" value="YcgL-like_sf"/>
</dbReference>
<dbReference type="InterPro" id="IPR027354">
    <property type="entry name" value="YcgL_dom"/>
</dbReference>
<dbReference type="PANTHER" id="PTHR38109">
    <property type="entry name" value="PROTEIN YCGL"/>
    <property type="match status" value="1"/>
</dbReference>
<dbReference type="PANTHER" id="PTHR38109:SF1">
    <property type="entry name" value="PROTEIN YCGL"/>
    <property type="match status" value="1"/>
</dbReference>
<dbReference type="Pfam" id="PF05166">
    <property type="entry name" value="YcgL"/>
    <property type="match status" value="1"/>
</dbReference>
<dbReference type="SUPFAM" id="SSF160191">
    <property type="entry name" value="YcgL-like"/>
    <property type="match status" value="1"/>
</dbReference>
<dbReference type="PROSITE" id="PS51648">
    <property type="entry name" value="YCGL"/>
    <property type="match status" value="1"/>
</dbReference>
<proteinExistence type="inferred from homology"/>
<organism>
    <name type="scientific">Shewanella baltica (strain OS185)</name>
    <dbReference type="NCBI Taxonomy" id="402882"/>
    <lineage>
        <taxon>Bacteria</taxon>
        <taxon>Pseudomonadati</taxon>
        <taxon>Pseudomonadota</taxon>
        <taxon>Gammaproteobacteria</taxon>
        <taxon>Alteromonadales</taxon>
        <taxon>Shewanellaceae</taxon>
        <taxon>Shewanella</taxon>
    </lineage>
</organism>
<name>Y1896_SHEB8</name>
<gene>
    <name type="ordered locus">Shew185_1896</name>
</gene>
<evidence type="ECO:0000255" key="1">
    <source>
        <dbReference type="HAMAP-Rule" id="MF_01866"/>
    </source>
</evidence>
<feature type="chain" id="PRO_0000375365" description="YcgL domain-containing protein Shew185_1896">
    <location>
        <begin position="1"/>
        <end position="92"/>
    </location>
</feature>
<feature type="domain" description="YcgL" evidence="1">
    <location>
        <begin position="1"/>
        <end position="85"/>
    </location>
</feature>